<protein>
    <recommendedName>
        <fullName evidence="10">Cell adhesion molecule DSCAM</fullName>
    </recommendedName>
    <alternativeName>
        <fullName>Down syndrome cell adhesion molecule homolog</fullName>
    </alternativeName>
</protein>
<proteinExistence type="evidence at protein level"/>
<evidence type="ECO:0000250" key="1"/>
<evidence type="ECO:0000250" key="2">
    <source>
        <dbReference type="UniProtKB" id="F1NY98"/>
    </source>
</evidence>
<evidence type="ECO:0000250" key="3">
    <source>
        <dbReference type="UniProtKB" id="O60469"/>
    </source>
</evidence>
<evidence type="ECO:0000250" key="4">
    <source>
        <dbReference type="UniProtKB" id="Q9ERC8"/>
    </source>
</evidence>
<evidence type="ECO:0000255" key="5"/>
<evidence type="ECO:0000255" key="6">
    <source>
        <dbReference type="PROSITE-ProRule" id="PRU00114"/>
    </source>
</evidence>
<evidence type="ECO:0000255" key="7">
    <source>
        <dbReference type="PROSITE-ProRule" id="PRU00316"/>
    </source>
</evidence>
<evidence type="ECO:0000256" key="8">
    <source>
        <dbReference type="SAM" id="MobiDB-lite"/>
    </source>
</evidence>
<evidence type="ECO:0000269" key="9">
    <source>
    </source>
</evidence>
<evidence type="ECO:0000305" key="10"/>
<accession>Q8VHZ8</accession>
<feature type="signal peptide" evidence="5">
    <location>
        <begin position="1"/>
        <end position="17"/>
    </location>
</feature>
<feature type="chain" id="PRO_0000392479" description="Cell adhesion molecule DSCAM">
    <location>
        <begin position="18"/>
        <end position="2013"/>
    </location>
</feature>
<feature type="topological domain" description="Extracellular" evidence="5">
    <location>
        <begin position="19"/>
        <end position="1594"/>
    </location>
</feature>
<feature type="transmembrane region" description="Helical" evidence="5">
    <location>
        <begin position="1595"/>
        <end position="1615"/>
    </location>
</feature>
<feature type="topological domain" description="Cytoplasmic" evidence="5">
    <location>
        <begin position="1616"/>
        <end position="2013"/>
    </location>
</feature>
<feature type="domain" description="Ig-like C2-type 1">
    <location>
        <begin position="20"/>
        <end position="119"/>
    </location>
</feature>
<feature type="domain" description="Ig-like C2-type 2">
    <location>
        <begin position="125"/>
        <end position="216"/>
    </location>
</feature>
<feature type="domain" description="Ig-like C2-type 3">
    <location>
        <begin position="225"/>
        <end position="305"/>
    </location>
</feature>
<feature type="domain" description="Ig-like C2-type 4">
    <location>
        <begin position="313"/>
        <end position="401"/>
    </location>
</feature>
<feature type="domain" description="Ig-like C2-type 5">
    <location>
        <begin position="407"/>
        <end position="500"/>
    </location>
</feature>
<feature type="domain" description="Ig-like C2-type 6">
    <location>
        <begin position="504"/>
        <end position="592"/>
    </location>
</feature>
<feature type="domain" description="Ig-like C2-type 7">
    <location>
        <begin position="596"/>
        <end position="685"/>
    </location>
</feature>
<feature type="domain" description="Ig-like C2-type 8">
    <location>
        <begin position="690"/>
        <end position="783"/>
    </location>
</feature>
<feature type="domain" description="Ig-like C2-type 9">
    <location>
        <begin position="787"/>
        <end position="883"/>
    </location>
</feature>
<feature type="domain" description="Fibronectin type-III 1" evidence="7">
    <location>
        <begin position="885"/>
        <end position="982"/>
    </location>
</feature>
<feature type="domain" description="Fibronectin type-III 2" evidence="7">
    <location>
        <begin position="987"/>
        <end position="1086"/>
    </location>
</feature>
<feature type="domain" description="Fibronectin type-III 3" evidence="7">
    <location>
        <begin position="1091"/>
        <end position="1187"/>
    </location>
</feature>
<feature type="domain" description="Fibronectin type-III 4" evidence="7">
    <location>
        <begin position="1191"/>
        <end position="1285"/>
    </location>
</feature>
<feature type="domain" description="Ig-like C2-type 10">
    <location>
        <begin position="1285"/>
        <end position="1377"/>
    </location>
</feature>
<feature type="domain" description="Fibronectin type-III 5" evidence="7">
    <location>
        <begin position="1379"/>
        <end position="1473"/>
    </location>
</feature>
<feature type="domain" description="Fibronectin type-III 6" evidence="7">
    <location>
        <begin position="1474"/>
        <end position="1575"/>
    </location>
</feature>
<feature type="region of interest" description="Required for netrin-mediated axon repulsion of neuronal growth cones" evidence="4">
    <location>
        <begin position="1616"/>
        <end position="2013"/>
    </location>
</feature>
<feature type="region of interest" description="Disordered" evidence="8">
    <location>
        <begin position="1718"/>
        <end position="1809"/>
    </location>
</feature>
<feature type="region of interest" description="Disordered" evidence="8">
    <location>
        <begin position="1920"/>
        <end position="2013"/>
    </location>
</feature>
<feature type="compositionally biased region" description="Low complexity" evidence="8">
    <location>
        <begin position="1799"/>
        <end position="1809"/>
    </location>
</feature>
<feature type="compositionally biased region" description="Polar residues" evidence="8">
    <location>
        <begin position="1949"/>
        <end position="1968"/>
    </location>
</feature>
<feature type="glycosylation site" description="N-linked (GlcNAc...) asparagine" evidence="5">
    <location>
        <position position="78"/>
    </location>
</feature>
<feature type="glycosylation site" description="N-linked (GlcNAc...) asparagine" evidence="5">
    <location>
        <position position="470"/>
    </location>
</feature>
<feature type="glycosylation site" description="N-linked (GlcNAc...) asparagine" evidence="5">
    <location>
        <position position="666"/>
    </location>
</feature>
<feature type="glycosylation site" description="N-linked (GlcNAc...) asparagine" evidence="5">
    <location>
        <position position="1160"/>
    </location>
</feature>
<feature type="glycosylation site" description="N-linked (GlcNAc...) asparagine" evidence="5">
    <location>
        <position position="1250"/>
    </location>
</feature>
<feature type="disulfide bond" evidence="6">
    <location>
        <begin position="46"/>
        <end position="102"/>
    </location>
</feature>
<feature type="disulfide bond" evidence="6">
    <location>
        <begin position="145"/>
        <end position="197"/>
    </location>
</feature>
<feature type="disulfide bond" evidence="6">
    <location>
        <begin position="246"/>
        <end position="293"/>
    </location>
</feature>
<feature type="disulfide bond" evidence="6">
    <location>
        <begin position="335"/>
        <end position="385"/>
    </location>
</feature>
<feature type="disulfide bond" evidence="6">
    <location>
        <begin position="428"/>
        <end position="484"/>
    </location>
</feature>
<feature type="disulfide bond" evidence="6">
    <location>
        <begin position="525"/>
        <end position="575"/>
    </location>
</feature>
<feature type="disulfide bond" evidence="6">
    <location>
        <begin position="617"/>
        <end position="669"/>
    </location>
</feature>
<feature type="disulfide bond" evidence="6">
    <location>
        <begin position="711"/>
        <end position="766"/>
    </location>
</feature>
<feature type="disulfide bond" evidence="6">
    <location>
        <begin position="809"/>
        <end position="865"/>
    </location>
</feature>
<feature type="disulfide bond" evidence="6">
    <location>
        <begin position="1307"/>
        <end position="1359"/>
    </location>
</feature>
<gene>
    <name type="primary">Dscam</name>
</gene>
<keyword id="KW-0130">Cell adhesion</keyword>
<keyword id="KW-1003">Cell membrane</keyword>
<keyword id="KW-0966">Cell projection</keyword>
<keyword id="KW-1015">Disulfide bond</keyword>
<keyword id="KW-0325">Glycoprotein</keyword>
<keyword id="KW-0393">Immunoglobulin domain</keyword>
<keyword id="KW-0472">Membrane</keyword>
<keyword id="KW-0524">Neurogenesis</keyword>
<keyword id="KW-0597">Phosphoprotein</keyword>
<keyword id="KW-1185">Reference proteome</keyword>
<keyword id="KW-0677">Repeat</keyword>
<keyword id="KW-0732">Signal</keyword>
<keyword id="KW-0770">Synapse</keyword>
<keyword id="KW-0812">Transmembrane</keyword>
<keyword id="KW-1133">Transmembrane helix</keyword>
<sequence>MWILALSLFQSFANVFSEEPHSSLYFVNASLQEVVFASTSGTLVPCPAAGIPPVTLRWYLATGEEIYDVPGIRHVHPNGTLQIFPFPPSSFSTLIHDNTYYCTAENPSGKIRSQDVHIKAVLREPYTVRVEDQKTMRGNVAVFKCIIPSSVEAYVTVVSWEKDTVSLVSGSRFLITSTGALYIKDVQNEDGLYNYRCITRHRYTGETRQSNSARLFVSDPANSAPSILDGFDHRKAMAGQRVELPCKALGHPEPDYRWLKDNMPLELSGRFQKTVTGLLIENSRPSDSGSYVCEVSNRYGTAKVIGRLYVKQPLKATISPRKVKSSVGSQVSLSCSVTGNEDQELSWYRNGEILNPGKNVRITGLNHANLIMDHMVKSDGGAYQCFVRKDKLSAQDYVQVVLEDGTPKIISAFSEKVVSPAEPVSLVCNVKGTPLPTVTWTLDDDPILKGSGHRISQMITSEGNVVSYLNISSSQVRDGGVYRCTANNSAGVVLYQARINVRGPASIRPMKNITAIAGRDTYIHCRVIGYPYYSIKWYKNANLLPFNHRQVAFENNGTLKLSDVQKEVDEGEYTCNVLVQPQLSTSQSVHVTVKVPPFIQPFEFPRFSIGQRVFIPCVVVSGDLPITITWQKDGRPIPASLGVTIDNIDFTSSLRISNLSLMHNGNYTCIARNEAAAVEHQSQLIVRVPPKFVVQPRDQDGIYGKAVILNCSAEGYPVPTIVWKFSKGAGVPQFQPIALNGRIQVLSNGSLLIKHVVEEDSGYYLCKVSNDVGADVSKSMYLTVKIPAMITSYPNTTLATQGQRKEMSCTAHGEKPIIVRWEKEDRIINPEMARYLVSTKEVGEEVISTLQILPTVREDSGFFSCHAINSYGEDRGIIQLTVQEPPDPPEIEIKDVKARTITLRWTMGFDGNSPITGYDIECKNKSDSWDSAQRTKDVSPQLNSATIIDIHPSSTYSIRMYAKNRIGKSEPSNEITITADEAAPDGPPQEVHLEPTSSQSIRVTWKAPKKHLQNGIIRGYQIGYREYSTGGNFQFNIISIDTTGDSEVYTLDNLNKFTQYGLVVQACNRAGTGPSSQEIITTTLEDVPSYPPENVQAIATSPESISISWSTLSKEALNGILQGFRVIYWANLIDGELGEIKNVTTTQPSLELDGLEKYTNYSIQVLAFTRAGDGVRSEQIFTRTKEDVPGPPAGVKAAAASASMVFVSWLPPLKLNGIIRKYTVFCSHPYPTVISEFEASPDSFSYRIPNLSRNRQYSVWVVAVTSAGRGNSSEIITVEPLAKAPARILTFSGTVTTPWMKDIVLPCKAVGDPSPAVKWMKDSNGTPSLVTIDGRRSIFSNGSFVIRTVKAEDSGYYSCVANNNWGSDEIILNLQVQVPPDQPRLTVSKTTSSSITLSWLPGDNGGSSIRGYILQYSEDNSEQWGSFPISPSERSYRLENLKCGTWYKFTLTAQNGVGPGRISEIIEAKTLGKEPQFSKEQELFASINTTRVRLNLIGWNDGGCPITSFTLEYRPFGTTVWTTAQRTSLSKSYILYDLQEATWYELQMRVCNSAGCAEKQANFATLNYDGSTIPPLIKSVVQSEEGLTTNEGLKILVTISCILVGVLLLFVLLLVVRRRRREQRLKRLRDAKSLAEMLMSKNTRTSDTLSKQQQTLRMHIDIPRAQLLIEERDTMETIDDRSTVLLTDADFGEAAKQKSLTVTHTVHYQSVSQATGPLVDVSDARPGTNPTTRRNAKAGPTARNRYASQWTLNRPHPTISAHTLTTDWRLPTPRATGSVDKESDSYSVSPSQDTDRARSSMVSTESASSTYEELARAYEHAKMEEQLRHAKFTITECFISDTSSEQLTAGTNEYTDSLTSSTPSESGICRFTASPPKPQDGGRVVNMAVPKAHRPGDLIHLPPYLRMDFLLNRGAPGTSRDLSLGQACLEPQKSRTLKRPTVLEPTPMEASSSTSSTREGQQSWQQGAVATLPQREGAELGQAAKMSSSQESLLDSRGHLKGNNPYAKSYTLV</sequence>
<name>DSCAM_RAT</name>
<comment type="function">
    <text evidence="2 3 4 9">Cell adhesion molecule that plays a role in neuronal self-avoidance. Promotes repulsion between specific neuronal processes of either the same cell or the same subtype of cells. Mediates within retinal amacrine and ganglion cell subtypes both isoneuronal self-avoidance for creating an orderly dendritic arborization and heteroneuronal self-avoidance to maintain the mosaic spacing between amacrine and ganglion cell bodies (By similarity). Receptor for netrin required for axon guidance independently of and in collaboration with the receptor DCC (PubMed:18585357). Might also collaborate with UNC5C in NTN1-mediated axon repulsion independently of DCC (By similarity). In spinal cord development plays a role in guiding commissural axons projection and pathfinding across the ventral midline to reach the floor plate upon ligand binding. Mediates intracellular signaling by stimulating the activation of MAPK8 and MAP kinase p38 (By similarity). Adhesion molecule that promotes lamina-specific synaptic connections in the retina: expressed in specific subsets of interneurons and retinal ganglion cells (RGCs) and promotes synaptic connectivity via homophilic interactions (By similarity).</text>
</comment>
<comment type="subunit">
    <text evidence="2 3 4">Homodimer; mediates homophilic interactions to promote cell adhesion (By similarity). Interacts with DCC; the interaction is abolished in response to NTN1 (By similarity). Interacts (via extracellular domain) with NTN1 (By similarity). Interacts (via extracellular domain) with UNC5C (via Ig-like C2-type domain) (By similarity). Interacts with PTK2 (By similarity). Interacts with FYN (By similarity).</text>
</comment>
<comment type="subcellular location">
    <subcellularLocation>
        <location evidence="4">Cell membrane</location>
        <topology evidence="4">Single-pass type I membrane protein</topology>
    </subcellularLocation>
    <subcellularLocation>
        <location evidence="4">Cell projection</location>
        <location evidence="4">Axon</location>
    </subcellularLocation>
    <subcellularLocation>
        <location evidence="4">Cell projection</location>
        <location evidence="4">Dendrite</location>
    </subcellularLocation>
    <subcellularLocation>
        <location evidence="4">Cell projection</location>
        <location evidence="4">Growth cone</location>
    </subcellularLocation>
    <subcellularLocation>
        <location evidence="2">Synapse</location>
    </subcellularLocation>
    <text evidence="4">Localized in the soma, cell membrane, axon and growth cone of dissociated commissural axons.</text>
</comment>
<comment type="developmental stage">
    <text evidence="9">Expressed in spinal cord at 11 dpc. Expressed in precrossing commissural axons and growth cones of neurons that crossed the midline at 12 dpc. Expressed in axons coursing in the ventral and dorsal funiculus ar 13 dpc. Expressed in postcrossing axons at 15 dpc (at protein level).</text>
</comment>
<comment type="domain">
    <text evidence="1">Ig-like C2-type domains 7 to 9 are sufficient for interaction with NTN1 and commissural axon outgrowth. The transmembrane domain is necessary for interaction with DCC (By similarity).</text>
</comment>
<comment type="PTM">
    <text evidence="3">Phosphorylated at tyrosine residues. Phosphorylation is enhanced by NTN1.</text>
</comment>
<reference key="1">
    <citation type="submission" date="2001-01" db="EMBL/GenBank/DDBJ databases">
        <title>Rat homolog for Down syndrome cell adhesion molecule (Dscam) mRNA, complete cds.</title>
        <authorList>
            <person name="Agarwala K.L."/>
            <person name="Tsutsumi Y."/>
            <person name="Amano K."/>
            <person name="Suzuki T."/>
            <person name="Yamakawa K."/>
        </authorList>
    </citation>
    <scope>NUCLEOTIDE SEQUENCE [MRNA]</scope>
    <source>
        <strain>Sprague-Dawley</strain>
    </source>
</reference>
<reference key="2">
    <citation type="journal article" date="2008" name="Cell">
        <title>DSCAM is a netrin receptor that collaborates with DCC in mediating turning responses to netrin-1.</title>
        <authorList>
            <person name="Ly A."/>
            <person name="Nikolaev A."/>
            <person name="Suresh G."/>
            <person name="Zheng Y."/>
            <person name="Tessier-Lavigne M."/>
            <person name="Stein E."/>
        </authorList>
    </citation>
    <scope>FUNCTION</scope>
    <scope>DEVELOPMENTAL STAGE</scope>
</reference>
<dbReference type="EMBL" id="AF334385">
    <property type="protein sequence ID" value="AAL57167.1"/>
    <property type="molecule type" value="mRNA"/>
</dbReference>
<dbReference type="RefSeq" id="NP_598271.1">
    <property type="nucleotide sequence ID" value="NM_133587.1"/>
</dbReference>
<dbReference type="SMR" id="Q8VHZ8"/>
<dbReference type="FunCoup" id="Q8VHZ8">
    <property type="interactions" value="538"/>
</dbReference>
<dbReference type="IntAct" id="Q8VHZ8">
    <property type="interactions" value="1"/>
</dbReference>
<dbReference type="STRING" id="10116.ENSRNOP00000002215"/>
<dbReference type="CarbonylDB" id="Q8VHZ8"/>
<dbReference type="GlyCosmos" id="Q8VHZ8">
    <property type="glycosylation" value="5 sites, No reported glycans"/>
</dbReference>
<dbReference type="GlyGen" id="Q8VHZ8">
    <property type="glycosylation" value="6 sites"/>
</dbReference>
<dbReference type="iPTMnet" id="Q8VHZ8"/>
<dbReference type="PhosphoSitePlus" id="Q8VHZ8"/>
<dbReference type="PaxDb" id="10116-ENSRNOP00000002215"/>
<dbReference type="Ensembl" id="ENSRNOT00000094934.1">
    <property type="protein sequence ID" value="ENSRNOP00000085284.1"/>
    <property type="gene ID" value="ENSRNOG00000027992.7"/>
</dbReference>
<dbReference type="GeneID" id="171119"/>
<dbReference type="KEGG" id="rno:171119"/>
<dbReference type="AGR" id="RGD:619992"/>
<dbReference type="CTD" id="1826"/>
<dbReference type="RGD" id="619992">
    <property type="gene designation" value="Dscam"/>
</dbReference>
<dbReference type="eggNOG" id="KOG3510">
    <property type="taxonomic scope" value="Eukaryota"/>
</dbReference>
<dbReference type="GeneTree" id="ENSGT00940000154678"/>
<dbReference type="InParanoid" id="Q8VHZ8"/>
<dbReference type="PhylomeDB" id="Q8VHZ8"/>
<dbReference type="Reactome" id="R-RNO-376172">
    <property type="pathway name" value="DSCAM interactions"/>
</dbReference>
<dbReference type="PRO" id="PR:Q8VHZ8"/>
<dbReference type="Proteomes" id="UP000002494">
    <property type="component" value="Chromosome 11"/>
</dbReference>
<dbReference type="GO" id="GO:0030424">
    <property type="term" value="C:axon"/>
    <property type="evidence" value="ECO:0000250"/>
    <property type="project" value="UniProtKB"/>
</dbReference>
<dbReference type="GO" id="GO:0030425">
    <property type="term" value="C:dendrite"/>
    <property type="evidence" value="ECO:0000250"/>
    <property type="project" value="UniProtKB"/>
</dbReference>
<dbReference type="GO" id="GO:0030426">
    <property type="term" value="C:growth cone"/>
    <property type="evidence" value="ECO:0000250"/>
    <property type="project" value="UniProtKB"/>
</dbReference>
<dbReference type="GO" id="GO:0043025">
    <property type="term" value="C:neuronal cell body"/>
    <property type="evidence" value="ECO:0000250"/>
    <property type="project" value="UniProtKB"/>
</dbReference>
<dbReference type="GO" id="GO:0005886">
    <property type="term" value="C:plasma membrane"/>
    <property type="evidence" value="ECO:0000250"/>
    <property type="project" value="UniProtKB"/>
</dbReference>
<dbReference type="GO" id="GO:0045202">
    <property type="term" value="C:synapse"/>
    <property type="evidence" value="ECO:0000250"/>
    <property type="project" value="UniProtKB"/>
</dbReference>
<dbReference type="GO" id="GO:0098632">
    <property type="term" value="F:cell-cell adhesion mediator activity"/>
    <property type="evidence" value="ECO:0000318"/>
    <property type="project" value="GO_Central"/>
</dbReference>
<dbReference type="GO" id="GO:1990890">
    <property type="term" value="F:netrin receptor binding"/>
    <property type="evidence" value="ECO:0000266"/>
    <property type="project" value="RGD"/>
</dbReference>
<dbReference type="GO" id="GO:1990782">
    <property type="term" value="F:protein tyrosine kinase binding"/>
    <property type="evidence" value="ECO:0000266"/>
    <property type="project" value="RGD"/>
</dbReference>
<dbReference type="GO" id="GO:0007411">
    <property type="term" value="P:axon guidance"/>
    <property type="evidence" value="ECO:0000250"/>
    <property type="project" value="UniProtKB"/>
</dbReference>
<dbReference type="GO" id="GO:0060219">
    <property type="term" value="P:camera-type eye photoreceptor cell differentiation"/>
    <property type="evidence" value="ECO:0000250"/>
    <property type="project" value="UniProtKB"/>
</dbReference>
<dbReference type="GO" id="GO:0007417">
    <property type="term" value="P:central nervous system development"/>
    <property type="evidence" value="ECO:0000318"/>
    <property type="project" value="GO_Central"/>
</dbReference>
<dbReference type="GO" id="GO:0048813">
    <property type="term" value="P:dendrite morphogenesis"/>
    <property type="evidence" value="ECO:0000266"/>
    <property type="project" value="RGD"/>
</dbReference>
<dbReference type="GO" id="GO:0070593">
    <property type="term" value="P:dendrite self-avoidance"/>
    <property type="evidence" value="ECO:0000250"/>
    <property type="project" value="UniProtKB"/>
</dbReference>
<dbReference type="GO" id="GO:0060996">
    <property type="term" value="P:dendritic spine development"/>
    <property type="evidence" value="ECO:0000266"/>
    <property type="project" value="RGD"/>
</dbReference>
<dbReference type="GO" id="GO:0007156">
    <property type="term" value="P:homophilic cell adhesion via plasma membrane adhesion molecules"/>
    <property type="evidence" value="ECO:0000250"/>
    <property type="project" value="UniProtKB"/>
</dbReference>
<dbReference type="GO" id="GO:0007626">
    <property type="term" value="P:locomotory behavior"/>
    <property type="evidence" value="ECO:0000266"/>
    <property type="project" value="RGD"/>
</dbReference>
<dbReference type="GO" id="GO:0007162">
    <property type="term" value="P:negative regulation of cell adhesion"/>
    <property type="evidence" value="ECO:0000250"/>
    <property type="project" value="UniProtKB"/>
</dbReference>
<dbReference type="GO" id="GO:0038007">
    <property type="term" value="P:netrin-activated signaling pathway"/>
    <property type="evidence" value="ECO:0000250"/>
    <property type="project" value="UniProtKB"/>
</dbReference>
<dbReference type="GO" id="GO:0048842">
    <property type="term" value="P:positive regulation of axon extension involved in axon guidance"/>
    <property type="evidence" value="ECO:0000315"/>
    <property type="project" value="UniProtKB"/>
</dbReference>
<dbReference type="GO" id="GO:0042327">
    <property type="term" value="P:positive regulation of phosphorylation"/>
    <property type="evidence" value="ECO:0000250"/>
    <property type="project" value="UniProtKB"/>
</dbReference>
<dbReference type="GO" id="GO:0060060">
    <property type="term" value="P:post-embryonic retina morphogenesis in camera-type eye"/>
    <property type="evidence" value="ECO:0000266"/>
    <property type="project" value="RGD"/>
</dbReference>
<dbReference type="GO" id="GO:0010842">
    <property type="term" value="P:retina layer formation"/>
    <property type="evidence" value="ECO:0000250"/>
    <property type="project" value="UniProtKB"/>
</dbReference>
<dbReference type="GO" id="GO:0035176">
    <property type="term" value="P:social behavior"/>
    <property type="evidence" value="ECO:0000266"/>
    <property type="project" value="RGD"/>
</dbReference>
<dbReference type="GO" id="GO:0007416">
    <property type="term" value="P:synapse assembly"/>
    <property type="evidence" value="ECO:0000250"/>
    <property type="project" value="UniProtKB"/>
</dbReference>
<dbReference type="GO" id="GO:0035249">
    <property type="term" value="P:synaptic transmission, glutamatergic"/>
    <property type="evidence" value="ECO:0000266"/>
    <property type="project" value="RGD"/>
</dbReference>
<dbReference type="CDD" id="cd00063">
    <property type="entry name" value="FN3"/>
    <property type="match status" value="6"/>
</dbReference>
<dbReference type="CDD" id="cd00096">
    <property type="entry name" value="Ig"/>
    <property type="match status" value="2"/>
</dbReference>
<dbReference type="CDD" id="cd05734">
    <property type="entry name" value="Ig_DSCAM"/>
    <property type="match status" value="1"/>
</dbReference>
<dbReference type="CDD" id="cd05735">
    <property type="entry name" value="Ig_DSCAM"/>
    <property type="match status" value="1"/>
</dbReference>
<dbReference type="FunFam" id="2.60.40.10:FF:000333">
    <property type="entry name" value="Down syndrome cell adhesion molecule"/>
    <property type="match status" value="1"/>
</dbReference>
<dbReference type="FunFam" id="2.60.40.10:FF:000401">
    <property type="entry name" value="Down syndrome cell adhesion molecule"/>
    <property type="match status" value="1"/>
</dbReference>
<dbReference type="FunFam" id="2.60.40.10:FF:000729">
    <property type="entry name" value="Down syndrome cell adhesion molecule"/>
    <property type="match status" value="1"/>
</dbReference>
<dbReference type="FunFam" id="2.60.40.10:FF:000141">
    <property type="entry name" value="Down syndrome cell adhesion molecule a"/>
    <property type="match status" value="1"/>
</dbReference>
<dbReference type="FunFam" id="2.60.40.10:FF:000176">
    <property type="entry name" value="Down syndrome cell adhesion molecule a"/>
    <property type="match status" value="1"/>
</dbReference>
<dbReference type="FunFam" id="2.60.40.10:FF:000215">
    <property type="entry name" value="Down syndrome cell adhesion molecule a"/>
    <property type="match status" value="1"/>
</dbReference>
<dbReference type="FunFam" id="2.60.40.10:FF:000017">
    <property type="entry name" value="Down syndrome cell adhesion molecule b"/>
    <property type="match status" value="1"/>
</dbReference>
<dbReference type="FunFam" id="2.60.40.10:FF:000104">
    <property type="entry name" value="Down syndrome cell adhesion molecule b"/>
    <property type="match status" value="1"/>
</dbReference>
<dbReference type="FunFam" id="2.60.40.10:FF:000167">
    <property type="entry name" value="Down syndrome cell adhesion molecule b"/>
    <property type="match status" value="1"/>
</dbReference>
<dbReference type="FunFam" id="2.60.40.10:FF:000172">
    <property type="entry name" value="Down syndrome cell adhesion molecule b"/>
    <property type="match status" value="1"/>
</dbReference>
<dbReference type="FunFam" id="2.60.40.10:FF:000219">
    <property type="entry name" value="Down syndrome cell adhesion molecule homolog"/>
    <property type="match status" value="1"/>
</dbReference>
<dbReference type="FunFam" id="2.60.40.10:FF:000229">
    <property type="entry name" value="Down syndrome cell adhesion molecule homolog"/>
    <property type="match status" value="1"/>
</dbReference>
<dbReference type="FunFam" id="2.60.40.10:FF:000120">
    <property type="entry name" value="Down syndrome cell adhesion molecule like 1"/>
    <property type="match status" value="1"/>
</dbReference>
<dbReference type="FunFam" id="2.60.40.10:FF:000264">
    <property type="entry name" value="Down syndrome cell adhesion molecule like 1"/>
    <property type="match status" value="1"/>
</dbReference>
<dbReference type="FunFam" id="2.60.40.10:FF:000315">
    <property type="entry name" value="Down syndrome cell adhesion molecule like 1"/>
    <property type="match status" value="1"/>
</dbReference>
<dbReference type="FunFam" id="2.60.40.10:FF:000477">
    <property type="entry name" value="DS cell adhesion molecule like 1"/>
    <property type="match status" value="1"/>
</dbReference>
<dbReference type="Gene3D" id="2.60.40.10">
    <property type="entry name" value="Immunoglobulins"/>
    <property type="match status" value="16"/>
</dbReference>
<dbReference type="InterPro" id="IPR056754">
    <property type="entry name" value="DSCAM/DSCAML_C"/>
</dbReference>
<dbReference type="InterPro" id="IPR003961">
    <property type="entry name" value="FN3_dom"/>
</dbReference>
<dbReference type="InterPro" id="IPR036116">
    <property type="entry name" value="FN3_sf"/>
</dbReference>
<dbReference type="InterPro" id="IPR007110">
    <property type="entry name" value="Ig-like_dom"/>
</dbReference>
<dbReference type="InterPro" id="IPR036179">
    <property type="entry name" value="Ig-like_dom_sf"/>
</dbReference>
<dbReference type="InterPro" id="IPR013783">
    <property type="entry name" value="Ig-like_fold"/>
</dbReference>
<dbReference type="InterPro" id="IPR013098">
    <property type="entry name" value="Ig_I-set"/>
</dbReference>
<dbReference type="InterPro" id="IPR003599">
    <property type="entry name" value="Ig_sub"/>
</dbReference>
<dbReference type="InterPro" id="IPR003598">
    <property type="entry name" value="Ig_sub2"/>
</dbReference>
<dbReference type="InterPro" id="IPR013106">
    <property type="entry name" value="Ig_V-set"/>
</dbReference>
<dbReference type="PANTHER" id="PTHR44170:SF6">
    <property type="entry name" value="CONTACTIN"/>
    <property type="match status" value="1"/>
</dbReference>
<dbReference type="PANTHER" id="PTHR44170">
    <property type="entry name" value="PROTEIN SIDEKICK"/>
    <property type="match status" value="1"/>
</dbReference>
<dbReference type="Pfam" id="PF00041">
    <property type="entry name" value="fn3"/>
    <property type="match status" value="5"/>
</dbReference>
<dbReference type="Pfam" id="PF25059">
    <property type="entry name" value="FN3_DSCAM-DSCAML_C"/>
    <property type="match status" value="1"/>
</dbReference>
<dbReference type="Pfam" id="PF07679">
    <property type="entry name" value="I-set"/>
    <property type="match status" value="5"/>
</dbReference>
<dbReference type="Pfam" id="PF13927">
    <property type="entry name" value="Ig_3"/>
    <property type="match status" value="3"/>
</dbReference>
<dbReference type="SMART" id="SM00060">
    <property type="entry name" value="FN3"/>
    <property type="match status" value="6"/>
</dbReference>
<dbReference type="SMART" id="SM00409">
    <property type="entry name" value="IG"/>
    <property type="match status" value="9"/>
</dbReference>
<dbReference type="SMART" id="SM00408">
    <property type="entry name" value="IGc2"/>
    <property type="match status" value="9"/>
</dbReference>
<dbReference type="SMART" id="SM00406">
    <property type="entry name" value="IGv"/>
    <property type="match status" value="4"/>
</dbReference>
<dbReference type="SUPFAM" id="SSF49265">
    <property type="entry name" value="Fibronectin type III"/>
    <property type="match status" value="3"/>
</dbReference>
<dbReference type="SUPFAM" id="SSF48726">
    <property type="entry name" value="Immunoglobulin"/>
    <property type="match status" value="10"/>
</dbReference>
<dbReference type="PROSITE" id="PS50853">
    <property type="entry name" value="FN3"/>
    <property type="match status" value="6"/>
</dbReference>
<dbReference type="PROSITE" id="PS50835">
    <property type="entry name" value="IG_LIKE"/>
    <property type="match status" value="10"/>
</dbReference>
<organism>
    <name type="scientific">Rattus norvegicus</name>
    <name type="common">Rat</name>
    <dbReference type="NCBI Taxonomy" id="10116"/>
    <lineage>
        <taxon>Eukaryota</taxon>
        <taxon>Metazoa</taxon>
        <taxon>Chordata</taxon>
        <taxon>Craniata</taxon>
        <taxon>Vertebrata</taxon>
        <taxon>Euteleostomi</taxon>
        <taxon>Mammalia</taxon>
        <taxon>Eutheria</taxon>
        <taxon>Euarchontoglires</taxon>
        <taxon>Glires</taxon>
        <taxon>Rodentia</taxon>
        <taxon>Myomorpha</taxon>
        <taxon>Muroidea</taxon>
        <taxon>Muridae</taxon>
        <taxon>Murinae</taxon>
        <taxon>Rattus</taxon>
    </lineage>
</organism>